<sequence length="550" mass="61789">MRNSASSNKNNNKGQNDFAEMEYMNITVVTSNEPYGLFDSSNPFFYKRRTPKFNLTLGGVHSGHVQRGLRDPICISTSGKGNCRDGYTKETSGPDSVRVLVATRAKPSKNLNSELDREFYDHFLEVLNRPEETGRFHFSTQFLYYREELFIAELNNSRLGGKPVVFDMDMSAGDFLSLFYLLKVPVEIIDLKAVIVSPTGWANTATIDVVYDLLHMMGRDDIPVGLGDMFAINQSEPVFPSAGDCKYAKAVPQGCGGFLDSDTLYGLARDLPRSPRRYENSVAHGAPSDTDRPELRQPLALEVWQNLTKSVDEVSKITVLTNGPLTSLAKIISSDKNSSSIIKEVYIVGGHISRGKSDKGNIFTVPSNSYAEFNMFLDPLAAKTVLESGLNITLIPLATQREFSFQAMLNRLYSSTKTPEARFVKRLLTRLQALHQKQRRYMHMDMFLGEILGAIFLGGDHALLKPKMRTEYIKVIAEGDESKDGHILIDKLRGKQIKILERVDLRGCYESFASRLDDKKQSAVIGSFEEQRMKWNTPPSYKPITARIFH</sequence>
<feature type="chain" id="PRO_0000455352" description="Nucleoside hydrolase 4">
    <location>
        <begin position="1"/>
        <end position="550"/>
    </location>
</feature>
<organism>
    <name type="scientific">Arabidopsis thaliana</name>
    <name type="common">Mouse-ear cress</name>
    <dbReference type="NCBI Taxonomy" id="3702"/>
    <lineage>
        <taxon>Eukaryota</taxon>
        <taxon>Viridiplantae</taxon>
        <taxon>Streptophyta</taxon>
        <taxon>Embryophyta</taxon>
        <taxon>Tracheophyta</taxon>
        <taxon>Spermatophyta</taxon>
        <taxon>Magnoliopsida</taxon>
        <taxon>eudicotyledons</taxon>
        <taxon>Gunneridae</taxon>
        <taxon>Pentapetalae</taxon>
        <taxon>rosids</taxon>
        <taxon>malvids</taxon>
        <taxon>Brassicales</taxon>
        <taxon>Brassicaceae</taxon>
        <taxon>Camelineae</taxon>
        <taxon>Arabidopsis</taxon>
    </lineage>
</organism>
<dbReference type="EC" id="3.2.2.-" evidence="1"/>
<dbReference type="EMBL" id="AC068655">
    <property type="status" value="NOT_ANNOTATED_CDS"/>
    <property type="molecule type" value="Genomic_DNA"/>
</dbReference>
<dbReference type="EMBL" id="CP002688">
    <property type="protein sequence ID" value="AED92625.1"/>
    <property type="molecule type" value="Genomic_DNA"/>
</dbReference>
<dbReference type="RefSeq" id="NP_197390.1">
    <property type="nucleotide sequence ID" value="NM_121894.1"/>
</dbReference>
<dbReference type="SMR" id="F4JZJ2"/>
<dbReference type="STRING" id="3702.F4JZJ2"/>
<dbReference type="iPTMnet" id="F4JZJ2"/>
<dbReference type="PaxDb" id="3702-AT5G18890.1"/>
<dbReference type="EnsemblPlants" id="AT5G18890.1">
    <property type="protein sequence ID" value="AT5G18890.1"/>
    <property type="gene ID" value="AT5G18890"/>
</dbReference>
<dbReference type="GeneID" id="832007"/>
<dbReference type="Gramene" id="AT5G18890.1">
    <property type="protein sequence ID" value="AT5G18890.1"/>
    <property type="gene ID" value="AT5G18890"/>
</dbReference>
<dbReference type="KEGG" id="ath:AT5G18890"/>
<dbReference type="Araport" id="AT5G18890"/>
<dbReference type="TAIR" id="AT5G18890">
    <property type="gene designation" value="NSH4"/>
</dbReference>
<dbReference type="eggNOG" id="KOG2938">
    <property type="taxonomic scope" value="Eukaryota"/>
</dbReference>
<dbReference type="HOGENOM" id="CLU_018945_2_0_1"/>
<dbReference type="InParanoid" id="F4JZJ2"/>
<dbReference type="OMA" id="RDPICIS"/>
<dbReference type="PhylomeDB" id="F4JZJ2"/>
<dbReference type="PRO" id="PR:F4JZJ2"/>
<dbReference type="Proteomes" id="UP000006548">
    <property type="component" value="Chromosome 5"/>
</dbReference>
<dbReference type="ExpressionAtlas" id="F4JZJ2">
    <property type="expression patterns" value="differential"/>
</dbReference>
<dbReference type="GO" id="GO:0005737">
    <property type="term" value="C:cytoplasm"/>
    <property type="evidence" value="ECO:0007669"/>
    <property type="project" value="UniProtKB-SubCell"/>
</dbReference>
<dbReference type="GO" id="GO:0016799">
    <property type="term" value="F:hydrolase activity, hydrolyzing N-glycosyl compounds"/>
    <property type="evidence" value="ECO:0007669"/>
    <property type="project" value="InterPro"/>
</dbReference>
<dbReference type="Gene3D" id="3.90.245.10">
    <property type="entry name" value="Ribonucleoside hydrolase-like"/>
    <property type="match status" value="1"/>
</dbReference>
<dbReference type="InterPro" id="IPR001910">
    <property type="entry name" value="Inosine/uridine_hydrolase_dom"/>
</dbReference>
<dbReference type="InterPro" id="IPR036452">
    <property type="entry name" value="Ribo_hydro-like"/>
</dbReference>
<dbReference type="PANTHER" id="PTHR46692">
    <property type="entry name" value="INOSINE-URIDINE PREFERRING NUCLEOSIDE HYDROLASE FAMILY PROTEIN"/>
    <property type="match status" value="1"/>
</dbReference>
<dbReference type="PANTHER" id="PTHR46692:SF1">
    <property type="entry name" value="NUCLEOSIDE HYDROLASE 3-RELATED"/>
    <property type="match status" value="1"/>
</dbReference>
<dbReference type="Pfam" id="PF01156">
    <property type="entry name" value="IU_nuc_hydro"/>
    <property type="match status" value="1"/>
</dbReference>
<dbReference type="SUPFAM" id="SSF53590">
    <property type="entry name" value="Nucleoside hydrolase"/>
    <property type="match status" value="1"/>
</dbReference>
<evidence type="ECO:0000250" key="1">
    <source>
        <dbReference type="UniProtKB" id="Q9SJM7"/>
    </source>
</evidence>
<evidence type="ECO:0000303" key="2">
    <source>
    </source>
</evidence>
<evidence type="ECO:0000305" key="3"/>
<evidence type="ECO:0000312" key="4">
    <source>
        <dbReference type="Araport" id="AT5G18890"/>
    </source>
</evidence>
<evidence type="ECO:0000312" key="5">
    <source>
        <dbReference type="EMBL" id="AC068655"/>
    </source>
</evidence>
<protein>
    <recommendedName>
        <fullName evidence="2">Nucleoside hydrolase 4</fullName>
        <ecNumber evidence="1">3.2.2.-</ecNumber>
    </recommendedName>
</protein>
<name>NSH4_ARATH</name>
<proteinExistence type="inferred from homology"/>
<keyword id="KW-0963">Cytoplasm</keyword>
<keyword id="KW-0378">Hydrolase</keyword>
<keyword id="KW-1185">Reference proteome</keyword>
<accession>F4JZJ2</accession>
<gene>
    <name evidence="2" type="primary">NSH4</name>
    <name evidence="4" type="ordered locus">At5g18890</name>
    <name evidence="5" type="ORF">F17K4.140</name>
</gene>
<comment type="function">
    <text evidence="1">May be involved in the degradation of nucleosides.</text>
</comment>
<comment type="subcellular location">
    <subcellularLocation>
        <location evidence="1">Cytoplasm</location>
    </subcellularLocation>
</comment>
<comment type="similarity">
    <text evidence="3">Belongs to the IUNH family.</text>
</comment>
<reference key="1">
    <citation type="journal article" date="2000" name="Nature">
        <title>Sequence and analysis of chromosome 5 of the plant Arabidopsis thaliana.</title>
        <authorList>
            <person name="Tabata S."/>
            <person name="Kaneko T."/>
            <person name="Nakamura Y."/>
            <person name="Kotani H."/>
            <person name="Kato T."/>
            <person name="Asamizu E."/>
            <person name="Miyajima N."/>
            <person name="Sasamoto S."/>
            <person name="Kimura T."/>
            <person name="Hosouchi T."/>
            <person name="Kawashima K."/>
            <person name="Kohara M."/>
            <person name="Matsumoto M."/>
            <person name="Matsuno A."/>
            <person name="Muraki A."/>
            <person name="Nakayama S."/>
            <person name="Nakazaki N."/>
            <person name="Naruo K."/>
            <person name="Okumura S."/>
            <person name="Shinpo S."/>
            <person name="Takeuchi C."/>
            <person name="Wada T."/>
            <person name="Watanabe A."/>
            <person name="Yamada M."/>
            <person name="Yasuda M."/>
            <person name="Sato S."/>
            <person name="de la Bastide M."/>
            <person name="Huang E."/>
            <person name="Spiegel L."/>
            <person name="Gnoj L."/>
            <person name="O'Shaughnessy A."/>
            <person name="Preston R."/>
            <person name="Habermann K."/>
            <person name="Murray J."/>
            <person name="Johnson D."/>
            <person name="Rohlfing T."/>
            <person name="Nelson J."/>
            <person name="Stoneking T."/>
            <person name="Pepin K."/>
            <person name="Spieth J."/>
            <person name="Sekhon M."/>
            <person name="Armstrong J."/>
            <person name="Becker M."/>
            <person name="Belter E."/>
            <person name="Cordum H."/>
            <person name="Cordes M."/>
            <person name="Courtney L."/>
            <person name="Courtney W."/>
            <person name="Dante M."/>
            <person name="Du H."/>
            <person name="Edwards J."/>
            <person name="Fryman J."/>
            <person name="Haakensen B."/>
            <person name="Lamar E."/>
            <person name="Latreille P."/>
            <person name="Leonard S."/>
            <person name="Meyer R."/>
            <person name="Mulvaney E."/>
            <person name="Ozersky P."/>
            <person name="Riley A."/>
            <person name="Strowmatt C."/>
            <person name="Wagner-McPherson C."/>
            <person name="Wollam A."/>
            <person name="Yoakum M."/>
            <person name="Bell M."/>
            <person name="Dedhia N."/>
            <person name="Parnell L."/>
            <person name="Shah R."/>
            <person name="Rodriguez M."/>
            <person name="Hoon See L."/>
            <person name="Vil D."/>
            <person name="Baker J."/>
            <person name="Kirchoff K."/>
            <person name="Toth K."/>
            <person name="King L."/>
            <person name="Bahret A."/>
            <person name="Miller B."/>
            <person name="Marra M.A."/>
            <person name="Martienssen R."/>
            <person name="McCombie W.R."/>
            <person name="Wilson R.K."/>
            <person name="Murphy G."/>
            <person name="Bancroft I."/>
            <person name="Volckaert G."/>
            <person name="Wambutt R."/>
            <person name="Duesterhoeft A."/>
            <person name="Stiekema W."/>
            <person name="Pohl T."/>
            <person name="Entian K.-D."/>
            <person name="Terryn N."/>
            <person name="Hartley N."/>
            <person name="Bent E."/>
            <person name="Johnson S."/>
            <person name="Langham S.-A."/>
            <person name="McCullagh B."/>
            <person name="Robben J."/>
            <person name="Grymonprez B."/>
            <person name="Zimmermann W."/>
            <person name="Ramsperger U."/>
            <person name="Wedler H."/>
            <person name="Balke K."/>
            <person name="Wedler E."/>
            <person name="Peters S."/>
            <person name="van Staveren M."/>
            <person name="Dirkse W."/>
            <person name="Mooijman P."/>
            <person name="Klein Lankhorst R."/>
            <person name="Weitzenegger T."/>
            <person name="Bothe G."/>
            <person name="Rose M."/>
            <person name="Hauf J."/>
            <person name="Berneiser S."/>
            <person name="Hempel S."/>
            <person name="Feldpausch M."/>
            <person name="Lamberth S."/>
            <person name="Villarroel R."/>
            <person name="Gielen J."/>
            <person name="Ardiles W."/>
            <person name="Bents O."/>
            <person name="Lemcke K."/>
            <person name="Kolesov G."/>
            <person name="Mayer K.F.X."/>
            <person name="Rudd S."/>
            <person name="Schoof H."/>
            <person name="Schueller C."/>
            <person name="Zaccaria P."/>
            <person name="Mewes H.-W."/>
            <person name="Bevan M."/>
            <person name="Fransz P.F."/>
        </authorList>
    </citation>
    <scope>NUCLEOTIDE SEQUENCE [LARGE SCALE GENOMIC DNA]</scope>
    <source>
        <strain>cv. Columbia</strain>
    </source>
</reference>
<reference key="2">
    <citation type="journal article" date="2017" name="Plant J.">
        <title>Araport11: a complete reannotation of the Arabidopsis thaliana reference genome.</title>
        <authorList>
            <person name="Cheng C.Y."/>
            <person name="Krishnakumar V."/>
            <person name="Chan A.P."/>
            <person name="Thibaud-Nissen F."/>
            <person name="Schobel S."/>
            <person name="Town C.D."/>
        </authorList>
    </citation>
    <scope>GENOME REANNOTATION</scope>
    <source>
        <strain>cv. Columbia</strain>
    </source>
</reference>
<reference key="3">
    <citation type="journal article" date="2011" name="Plant J.">
        <title>Arabidopsis nucleoside hydrolases involved in intracellular and extracellular degradation of purines.</title>
        <authorList>
            <person name="Jung B."/>
            <person name="Hoffmann C."/>
            <person name="Moehlmann T."/>
        </authorList>
    </citation>
    <scope>GENE FAMILY</scope>
    <scope>NOMENCLATURE</scope>
    <source>
        <strain>cv. Columbia</strain>
    </source>
</reference>